<keyword id="KW-0501">Molybdenum cofactor biosynthesis</keyword>
<keyword id="KW-0597">Phosphoprotein</keyword>
<keyword id="KW-0663">Pyridoxal phosphate</keyword>
<keyword id="KW-1185">Reference proteome</keyword>
<keyword id="KW-0808">Transferase</keyword>
<sequence length="789" mass="89446">MSKLDMDTPEFSANEQELIDKEFTRLERNQSTYLDHAGTTLYAESQVAHAAVQLHHDVISNPHTSRSTGDYVDQVRFKILEFFHTQAEDYQVIFTANASAALRLVAEHFDFGDKGNFHYCQENHTSVLGMRQMIQANGTYMLRREELSELREGHRVRRVMANGSSSTGNSLVVFSAQCNFSGYKMPLETIQLIQDDGLPHFGKLIAGQEDKETNGTAYNYYVCLDAASYAATNPLDLQKYKPDFVCLSFYKIFGYPTGVGALLVSRRGAELLSRPRQFYGGGTINYAYAHAMDYKLRNTSLHERFEDGTLPFLSIVELLEGFRSLERLIPTNSNTGISTMDRVSRHVFTLARYLENQLKQLKYANGQPLIQFYNHQGYEQRSRQGGIVAFNVRTESGGYVGFAEIACVASLHGILLRTGCFCNVGACQRYLQLDDQMMDVIYKRSGRICGDYNDLIDGQPTGAVRVSFGYMTRTSDVRKLVEMLEKSYLSSRSPERWRFIEKQASQLPKALQQRAQSLRPRLLELAIFPVKSCAALKAKKWPLTAQGLKYDREWMIVDRNGLALTQKRCTDLCLIQPSIDKDNLILMFNGDTNSSISLPLFLSDDDLQAAARCRSKICRQPIEGSDCGDQVAQWLDQNLGLDGLRLLRQSTQRSSSSHQLSLVNQAQFLLVNRSSVRSLQFEEPLDETVDRFRANLIIDTGAPFDELDYTSLSIGRIHFKVEGPCQRCDMICINQRTGERSPETLTTISRLQKGKMRFGIYITRLTDKEDNAELNEEYHLICGETLEVD</sequence>
<comment type="function">
    <text evidence="3">Sulfurates the molybdenum cofactor. Sulfation of molybdenum is essential for xanthine dehydrogenase (XDH) and aldehyde oxidase (ADO) enzymes in which molybdenum cofactor is liganded by 1 oxygen and 1 sulfur atom in active form.</text>
</comment>
<comment type="catalytic activity">
    <reaction evidence="3">
        <text>Mo-molybdopterin + L-cysteine + AH2 = thio-Mo-molybdopterin + L-alanine + A + H2O</text>
        <dbReference type="Rhea" id="RHEA:42636"/>
        <dbReference type="ChEBI" id="CHEBI:13193"/>
        <dbReference type="ChEBI" id="CHEBI:15377"/>
        <dbReference type="ChEBI" id="CHEBI:17499"/>
        <dbReference type="ChEBI" id="CHEBI:35235"/>
        <dbReference type="ChEBI" id="CHEBI:57972"/>
        <dbReference type="ChEBI" id="CHEBI:71302"/>
        <dbReference type="ChEBI" id="CHEBI:82685"/>
        <dbReference type="EC" id="2.8.1.9"/>
    </reaction>
</comment>
<comment type="cofactor">
    <cofactor evidence="3">
        <name>pyridoxal 5'-phosphate</name>
        <dbReference type="ChEBI" id="CHEBI:597326"/>
    </cofactor>
</comment>
<comment type="pathway">
    <text evidence="2">Cofactor biosynthesis; molybdopterin biosynthesis.</text>
</comment>
<comment type="similarity">
    <text evidence="3">Belongs to the class-V pyridoxal-phosphate-dependent aminotransferase family. MOCOS subfamily.</text>
</comment>
<organism>
    <name type="scientific">Drosophila willistoni</name>
    <name type="common">Fruit fly</name>
    <dbReference type="NCBI Taxonomy" id="7260"/>
    <lineage>
        <taxon>Eukaryota</taxon>
        <taxon>Metazoa</taxon>
        <taxon>Ecdysozoa</taxon>
        <taxon>Arthropoda</taxon>
        <taxon>Hexapoda</taxon>
        <taxon>Insecta</taxon>
        <taxon>Pterygota</taxon>
        <taxon>Neoptera</taxon>
        <taxon>Endopterygota</taxon>
        <taxon>Diptera</taxon>
        <taxon>Brachycera</taxon>
        <taxon>Muscomorpha</taxon>
        <taxon>Ephydroidea</taxon>
        <taxon>Drosophilidae</taxon>
        <taxon>Drosophila</taxon>
        <taxon>Sophophora</taxon>
    </lineage>
</organism>
<accession>B4N1V2</accession>
<feature type="chain" id="PRO_0000369376" description="Molybdenum cofactor sulfurase">
    <location>
        <begin position="1"/>
        <end position="789"/>
    </location>
</feature>
<feature type="domain" description="MOSC" evidence="3">
    <location>
        <begin position="628"/>
        <end position="789"/>
    </location>
</feature>
<feature type="active site" evidence="3">
    <location>
        <position position="422"/>
    </location>
</feature>
<feature type="modified residue" description="N6-(pyridoxal phosphate)lysine" evidence="3">
    <location>
        <position position="251"/>
    </location>
</feature>
<feature type="modified residue" description="Phosphoserine" evidence="1">
    <location>
        <position position="741"/>
    </location>
</feature>
<reference key="1">
    <citation type="journal article" date="2007" name="Nature">
        <title>Evolution of genes and genomes on the Drosophila phylogeny.</title>
        <authorList>
            <consortium name="Drosophila 12 genomes consortium"/>
        </authorList>
    </citation>
    <scope>NUCLEOTIDE SEQUENCE [LARGE SCALE GENOMIC DNA]</scope>
    <source>
        <strain>Tucson 14030-0811.24</strain>
    </source>
</reference>
<protein>
    <recommendedName>
        <fullName evidence="3">Molybdenum cofactor sulfurase</fullName>
        <shortName evidence="3">MCS</shortName>
        <shortName evidence="3">MOS</shortName>
        <shortName evidence="3">MoCo sulfurase</shortName>
        <ecNumber evidence="3">2.8.1.9</ecNumber>
    </recommendedName>
    <alternativeName>
        <fullName evidence="3">Molybdenum cofactor sulfurtransferase</fullName>
    </alternativeName>
    <alternativeName>
        <fullName evidence="3">Protein maroon-like</fullName>
        <shortName evidence="3">Ma-l</shortName>
    </alternativeName>
</protein>
<gene>
    <name evidence="3" type="primary">mal</name>
    <name type="ORF">GK16373</name>
</gene>
<evidence type="ECO:0000250" key="1"/>
<evidence type="ECO:0000250" key="2">
    <source>
        <dbReference type="UniProtKB" id="Q96EN8"/>
    </source>
</evidence>
<evidence type="ECO:0000255" key="3">
    <source>
        <dbReference type="HAMAP-Rule" id="MF_03050"/>
    </source>
</evidence>
<dbReference type="EC" id="2.8.1.9" evidence="3"/>
<dbReference type="EMBL" id="CH963925">
    <property type="protein sequence ID" value="EDW78341.1"/>
    <property type="molecule type" value="Genomic_DNA"/>
</dbReference>
<dbReference type="SMR" id="B4N1V2"/>
<dbReference type="STRING" id="7260.B4N1V2"/>
<dbReference type="EnsemblMetazoa" id="FBtr0247024">
    <property type="protein sequence ID" value="FBpp0245516"/>
    <property type="gene ID" value="FBgn0218375"/>
</dbReference>
<dbReference type="EnsemblMetazoa" id="XM_002067319.4">
    <property type="protein sequence ID" value="XP_002067355.1"/>
    <property type="gene ID" value="LOC6644650"/>
</dbReference>
<dbReference type="GeneID" id="6644650"/>
<dbReference type="KEGG" id="dwi:6644650"/>
<dbReference type="CTD" id="4118"/>
<dbReference type="eggNOG" id="KOG2142">
    <property type="taxonomic scope" value="Eukaryota"/>
</dbReference>
<dbReference type="HOGENOM" id="CLU_010913_0_1_1"/>
<dbReference type="OMA" id="PCTRCQM"/>
<dbReference type="OrthoDB" id="420046at2759"/>
<dbReference type="PhylomeDB" id="B4N1V2"/>
<dbReference type="UniPathway" id="UPA00344"/>
<dbReference type="Proteomes" id="UP000007798">
    <property type="component" value="Unassembled WGS sequence"/>
</dbReference>
<dbReference type="GO" id="GO:0016829">
    <property type="term" value="F:lyase activity"/>
    <property type="evidence" value="ECO:0007669"/>
    <property type="project" value="UniProtKB-UniRule"/>
</dbReference>
<dbReference type="GO" id="GO:0008265">
    <property type="term" value="F:molybdenum cofactor sulfurtransferase activity"/>
    <property type="evidence" value="ECO:0000250"/>
    <property type="project" value="UniProtKB"/>
</dbReference>
<dbReference type="GO" id="GO:0030151">
    <property type="term" value="F:molybdenum ion binding"/>
    <property type="evidence" value="ECO:0007669"/>
    <property type="project" value="UniProtKB-UniRule"/>
</dbReference>
<dbReference type="GO" id="GO:0030170">
    <property type="term" value="F:pyridoxal phosphate binding"/>
    <property type="evidence" value="ECO:0007669"/>
    <property type="project" value="UniProtKB-UniRule"/>
</dbReference>
<dbReference type="GO" id="GO:0006777">
    <property type="term" value="P:Mo-molybdopterin cofactor biosynthetic process"/>
    <property type="evidence" value="ECO:0007669"/>
    <property type="project" value="UniProtKB-UniRule"/>
</dbReference>
<dbReference type="GO" id="GO:0043545">
    <property type="term" value="P:molybdopterin cofactor metabolic process"/>
    <property type="evidence" value="ECO:0000250"/>
    <property type="project" value="UniProtKB"/>
</dbReference>
<dbReference type="FunFam" id="3.40.640.10:FF:000119">
    <property type="entry name" value="Molybdenum cofactor sulfurase"/>
    <property type="match status" value="1"/>
</dbReference>
<dbReference type="FunFam" id="3.90.1150.10:FF:000079">
    <property type="entry name" value="Molybdenum cofactor sulfurase"/>
    <property type="match status" value="1"/>
</dbReference>
<dbReference type="Gene3D" id="3.90.1150.10">
    <property type="entry name" value="Aspartate Aminotransferase, domain 1"/>
    <property type="match status" value="1"/>
</dbReference>
<dbReference type="Gene3D" id="3.40.640.10">
    <property type="entry name" value="Type I PLP-dependent aspartate aminotransferase-like (Major domain)"/>
    <property type="match status" value="1"/>
</dbReference>
<dbReference type="HAMAP" id="MF_03050">
    <property type="entry name" value="MOCOS"/>
    <property type="match status" value="1"/>
</dbReference>
<dbReference type="InterPro" id="IPR000192">
    <property type="entry name" value="Aminotrans_V_dom"/>
</dbReference>
<dbReference type="InterPro" id="IPR005302">
    <property type="entry name" value="MoCF_Sase_C"/>
</dbReference>
<dbReference type="InterPro" id="IPR028886">
    <property type="entry name" value="MoCo_sulfurase"/>
</dbReference>
<dbReference type="InterPro" id="IPR005303">
    <property type="entry name" value="MOCOS_middle"/>
</dbReference>
<dbReference type="InterPro" id="IPR015424">
    <property type="entry name" value="PyrdxlP-dep_Trfase"/>
</dbReference>
<dbReference type="InterPro" id="IPR015421">
    <property type="entry name" value="PyrdxlP-dep_Trfase_major"/>
</dbReference>
<dbReference type="InterPro" id="IPR015422">
    <property type="entry name" value="PyrdxlP-dep_Trfase_small"/>
</dbReference>
<dbReference type="InterPro" id="IPR011037">
    <property type="entry name" value="Pyrv_Knase-like_insert_dom_sf"/>
</dbReference>
<dbReference type="PANTHER" id="PTHR14237:SF19">
    <property type="entry name" value="MITOCHONDRIAL AMIDOXIME REDUCING COMPONENT 1"/>
    <property type="match status" value="1"/>
</dbReference>
<dbReference type="PANTHER" id="PTHR14237">
    <property type="entry name" value="MOLYBDOPTERIN COFACTOR SULFURASE MOSC"/>
    <property type="match status" value="1"/>
</dbReference>
<dbReference type="Pfam" id="PF00266">
    <property type="entry name" value="Aminotran_5"/>
    <property type="match status" value="2"/>
</dbReference>
<dbReference type="Pfam" id="PF03473">
    <property type="entry name" value="MOSC"/>
    <property type="match status" value="1"/>
</dbReference>
<dbReference type="Pfam" id="PF03476">
    <property type="entry name" value="MOSC_N"/>
    <property type="match status" value="1"/>
</dbReference>
<dbReference type="SUPFAM" id="SSF141673">
    <property type="entry name" value="MOSC N-terminal domain-like"/>
    <property type="match status" value="1"/>
</dbReference>
<dbReference type="SUPFAM" id="SSF50800">
    <property type="entry name" value="PK beta-barrel domain-like"/>
    <property type="match status" value="1"/>
</dbReference>
<dbReference type="SUPFAM" id="SSF53383">
    <property type="entry name" value="PLP-dependent transferases"/>
    <property type="match status" value="1"/>
</dbReference>
<dbReference type="PROSITE" id="PS51340">
    <property type="entry name" value="MOSC"/>
    <property type="match status" value="1"/>
</dbReference>
<name>MOCOS_DROWI</name>
<proteinExistence type="inferred from homology"/>